<sequence length="427" mass="46738">MHDPSELLEDGPAAVRRLARRRYDLDLAALEKAVRRRSEAQAEVTRLRTELNRTSRARGRSGPPSEEEKEAARALRADVQQAEATARTAGHDLTELLLGIPNVPLDSVPDGDTDQEAVEVRRWGRPPHDAGTDARHHSDIGESLGILDGPAAAKLSGSRFSVGRGAGARLERALADFFLDLHTGEHGYTEYSVPFLVNRDTMTGTGQLPKFEDDLFRTQVGDRELFLIPTAEVPLTNLVAQQLLDARALPYAFTARTPCFRAEAGAYGRDTRGILRLHQFEKVELVRVCAPEDAPAQLELMVGHAEECLRRLELSYRVVQLPAGDLGFSARMTYDIEVWLPGSDAYREISSVSDCGTFQARRADIRHKRADGRKAPAATLNGSALPIGRTVAALLEQGVREDGSVLLPEALVPYTGFRRILPGGATA</sequence>
<proteinExistence type="inferred from homology"/>
<evidence type="ECO:0000255" key="1">
    <source>
        <dbReference type="HAMAP-Rule" id="MF_00176"/>
    </source>
</evidence>
<evidence type="ECO:0000256" key="2">
    <source>
        <dbReference type="SAM" id="MobiDB-lite"/>
    </source>
</evidence>
<keyword id="KW-0030">Aminoacyl-tRNA synthetase</keyword>
<keyword id="KW-0067">ATP-binding</keyword>
<keyword id="KW-0963">Cytoplasm</keyword>
<keyword id="KW-0436">Ligase</keyword>
<keyword id="KW-0547">Nucleotide-binding</keyword>
<keyword id="KW-0648">Protein biosynthesis</keyword>
<keyword id="KW-1185">Reference proteome</keyword>
<feature type="chain" id="PRO_0000122130" description="Serine--tRNA ligase 2">
    <location>
        <begin position="1"/>
        <end position="427"/>
    </location>
</feature>
<feature type="region of interest" description="Disordered" evidence="2">
    <location>
        <begin position="35"/>
        <end position="72"/>
    </location>
</feature>
<feature type="compositionally biased region" description="Basic and acidic residues" evidence="2">
    <location>
        <begin position="35"/>
        <end position="53"/>
    </location>
</feature>
<feature type="binding site" evidence="1">
    <location>
        <begin position="230"/>
        <end position="232"/>
    </location>
    <ligand>
        <name>L-serine</name>
        <dbReference type="ChEBI" id="CHEBI:33384"/>
    </ligand>
</feature>
<feature type="binding site" evidence="1">
    <location>
        <begin position="261"/>
        <end position="263"/>
    </location>
    <ligand>
        <name>ATP</name>
        <dbReference type="ChEBI" id="CHEBI:30616"/>
    </ligand>
</feature>
<feature type="binding site" evidence="1">
    <location>
        <position position="284"/>
    </location>
    <ligand>
        <name>L-serine</name>
        <dbReference type="ChEBI" id="CHEBI:33384"/>
    </ligand>
</feature>
<feature type="binding site" evidence="1">
    <location>
        <begin position="348"/>
        <end position="351"/>
    </location>
    <ligand>
        <name>ATP</name>
        <dbReference type="ChEBI" id="CHEBI:30616"/>
    </ligand>
</feature>
<feature type="binding site" evidence="1">
    <location>
        <position position="383"/>
    </location>
    <ligand>
        <name>L-serine</name>
        <dbReference type="ChEBI" id="CHEBI:33384"/>
    </ligand>
</feature>
<comment type="function">
    <text evidence="1">Catalyzes the attachment of serine to tRNA(Ser). Is also able to aminoacylate tRNA(Sec) with serine, to form the misacylated tRNA L-seryl-tRNA(Sec), which will be further converted into selenocysteinyl-tRNA(Sec).</text>
</comment>
<comment type="catalytic activity">
    <reaction evidence="1">
        <text>tRNA(Ser) + L-serine + ATP = L-seryl-tRNA(Ser) + AMP + diphosphate + H(+)</text>
        <dbReference type="Rhea" id="RHEA:12292"/>
        <dbReference type="Rhea" id="RHEA-COMP:9669"/>
        <dbReference type="Rhea" id="RHEA-COMP:9703"/>
        <dbReference type="ChEBI" id="CHEBI:15378"/>
        <dbReference type="ChEBI" id="CHEBI:30616"/>
        <dbReference type="ChEBI" id="CHEBI:33019"/>
        <dbReference type="ChEBI" id="CHEBI:33384"/>
        <dbReference type="ChEBI" id="CHEBI:78442"/>
        <dbReference type="ChEBI" id="CHEBI:78533"/>
        <dbReference type="ChEBI" id="CHEBI:456215"/>
        <dbReference type="EC" id="6.1.1.11"/>
    </reaction>
</comment>
<comment type="catalytic activity">
    <reaction evidence="1">
        <text>tRNA(Sec) + L-serine + ATP = L-seryl-tRNA(Sec) + AMP + diphosphate + H(+)</text>
        <dbReference type="Rhea" id="RHEA:42580"/>
        <dbReference type="Rhea" id="RHEA-COMP:9742"/>
        <dbReference type="Rhea" id="RHEA-COMP:10128"/>
        <dbReference type="ChEBI" id="CHEBI:15378"/>
        <dbReference type="ChEBI" id="CHEBI:30616"/>
        <dbReference type="ChEBI" id="CHEBI:33019"/>
        <dbReference type="ChEBI" id="CHEBI:33384"/>
        <dbReference type="ChEBI" id="CHEBI:78442"/>
        <dbReference type="ChEBI" id="CHEBI:78533"/>
        <dbReference type="ChEBI" id="CHEBI:456215"/>
        <dbReference type="EC" id="6.1.1.11"/>
    </reaction>
</comment>
<comment type="pathway">
    <text evidence="1">Aminoacyl-tRNA biosynthesis; selenocysteinyl-tRNA(Sec) biosynthesis; L-seryl-tRNA(Sec) from L-serine and tRNA(Sec): step 1/1.</text>
</comment>
<comment type="subunit">
    <text evidence="1">Homodimer. The tRNA molecule binds across the dimer.</text>
</comment>
<comment type="subcellular location">
    <subcellularLocation>
        <location evidence="1">Cytoplasm</location>
    </subcellularLocation>
</comment>
<comment type="domain">
    <text evidence="1">Consists of two distinct domains, a catalytic core and a N-terminal extension that is involved in tRNA binding.</text>
</comment>
<comment type="similarity">
    <text evidence="1">Belongs to the class-II aminoacyl-tRNA synthetase family. Type-1 seryl-tRNA synthetase subfamily.</text>
</comment>
<accession>Q82KS8</accession>
<dbReference type="EC" id="6.1.1.11" evidence="1"/>
<dbReference type="EMBL" id="BA000030">
    <property type="protein sequence ID" value="BAC70005.1"/>
    <property type="molecule type" value="Genomic_DNA"/>
</dbReference>
<dbReference type="SMR" id="Q82KS8"/>
<dbReference type="GeneID" id="41539385"/>
<dbReference type="KEGG" id="sma:SAVERM_2294"/>
<dbReference type="eggNOG" id="COG0172">
    <property type="taxonomic scope" value="Bacteria"/>
</dbReference>
<dbReference type="HOGENOM" id="CLU_023797_1_1_11"/>
<dbReference type="OrthoDB" id="9804647at2"/>
<dbReference type="BRENDA" id="6.1.1.11">
    <property type="organism ID" value="5980"/>
</dbReference>
<dbReference type="UniPathway" id="UPA00906">
    <property type="reaction ID" value="UER00895"/>
</dbReference>
<dbReference type="Proteomes" id="UP000000428">
    <property type="component" value="Chromosome"/>
</dbReference>
<dbReference type="GO" id="GO:0005737">
    <property type="term" value="C:cytoplasm"/>
    <property type="evidence" value="ECO:0007669"/>
    <property type="project" value="UniProtKB-SubCell"/>
</dbReference>
<dbReference type="GO" id="GO:0005524">
    <property type="term" value="F:ATP binding"/>
    <property type="evidence" value="ECO:0007669"/>
    <property type="project" value="UniProtKB-UniRule"/>
</dbReference>
<dbReference type="GO" id="GO:0004828">
    <property type="term" value="F:serine-tRNA ligase activity"/>
    <property type="evidence" value="ECO:0007669"/>
    <property type="project" value="UniProtKB-UniRule"/>
</dbReference>
<dbReference type="GO" id="GO:0016260">
    <property type="term" value="P:selenocysteine biosynthetic process"/>
    <property type="evidence" value="ECO:0007669"/>
    <property type="project" value="UniProtKB-UniRule"/>
</dbReference>
<dbReference type="GO" id="GO:0006434">
    <property type="term" value="P:seryl-tRNA aminoacylation"/>
    <property type="evidence" value="ECO:0007669"/>
    <property type="project" value="UniProtKB-UniRule"/>
</dbReference>
<dbReference type="CDD" id="cd00770">
    <property type="entry name" value="SerRS_core"/>
    <property type="match status" value="1"/>
</dbReference>
<dbReference type="Gene3D" id="3.30.930.10">
    <property type="entry name" value="Bira Bifunctional Protein, Domain 2"/>
    <property type="match status" value="1"/>
</dbReference>
<dbReference type="Gene3D" id="1.10.287.40">
    <property type="entry name" value="Serine-tRNA synthetase, tRNA binding domain"/>
    <property type="match status" value="1"/>
</dbReference>
<dbReference type="HAMAP" id="MF_00176">
    <property type="entry name" value="Ser_tRNA_synth_type1"/>
    <property type="match status" value="1"/>
</dbReference>
<dbReference type="InterPro" id="IPR002314">
    <property type="entry name" value="aa-tRNA-synt_IIb"/>
</dbReference>
<dbReference type="InterPro" id="IPR006195">
    <property type="entry name" value="aa-tRNA-synth_II"/>
</dbReference>
<dbReference type="InterPro" id="IPR045864">
    <property type="entry name" value="aa-tRNA-synth_II/BPL/LPL"/>
</dbReference>
<dbReference type="InterPro" id="IPR002317">
    <property type="entry name" value="Ser-tRNA-ligase_type_1"/>
</dbReference>
<dbReference type="InterPro" id="IPR015866">
    <property type="entry name" value="Ser-tRNA-synth_1_N"/>
</dbReference>
<dbReference type="InterPro" id="IPR042103">
    <property type="entry name" value="SerRS_1_N_sf"/>
</dbReference>
<dbReference type="InterPro" id="IPR033729">
    <property type="entry name" value="SerRS_core"/>
</dbReference>
<dbReference type="InterPro" id="IPR010978">
    <property type="entry name" value="tRNA-bd_arm"/>
</dbReference>
<dbReference type="NCBIfam" id="TIGR00414">
    <property type="entry name" value="serS"/>
    <property type="match status" value="1"/>
</dbReference>
<dbReference type="PANTHER" id="PTHR43697:SF1">
    <property type="entry name" value="SERINE--TRNA LIGASE"/>
    <property type="match status" value="1"/>
</dbReference>
<dbReference type="PANTHER" id="PTHR43697">
    <property type="entry name" value="SERYL-TRNA SYNTHETASE"/>
    <property type="match status" value="1"/>
</dbReference>
<dbReference type="Pfam" id="PF02403">
    <property type="entry name" value="Seryl_tRNA_N"/>
    <property type="match status" value="1"/>
</dbReference>
<dbReference type="Pfam" id="PF00587">
    <property type="entry name" value="tRNA-synt_2b"/>
    <property type="match status" value="1"/>
</dbReference>
<dbReference type="PIRSF" id="PIRSF001529">
    <property type="entry name" value="Ser-tRNA-synth_IIa"/>
    <property type="match status" value="1"/>
</dbReference>
<dbReference type="PRINTS" id="PR00981">
    <property type="entry name" value="TRNASYNTHSER"/>
</dbReference>
<dbReference type="SUPFAM" id="SSF55681">
    <property type="entry name" value="Class II aaRS and biotin synthetases"/>
    <property type="match status" value="1"/>
</dbReference>
<dbReference type="SUPFAM" id="SSF46589">
    <property type="entry name" value="tRNA-binding arm"/>
    <property type="match status" value="1"/>
</dbReference>
<dbReference type="PROSITE" id="PS50862">
    <property type="entry name" value="AA_TRNA_LIGASE_II"/>
    <property type="match status" value="1"/>
</dbReference>
<protein>
    <recommendedName>
        <fullName evidence="1">Serine--tRNA ligase 2</fullName>
        <ecNumber evidence="1">6.1.1.11</ecNumber>
    </recommendedName>
    <alternativeName>
        <fullName evidence="1">Seryl-tRNA synthetase 2</fullName>
        <shortName evidence="1">SerRS 2</shortName>
    </alternativeName>
    <alternativeName>
        <fullName evidence="1">Seryl-tRNA(Ser/Sec) synthetase 2</fullName>
    </alternativeName>
</protein>
<reference key="1">
    <citation type="journal article" date="2001" name="Proc. Natl. Acad. Sci. U.S.A.">
        <title>Genome sequence of an industrial microorganism Streptomyces avermitilis: deducing the ability of producing secondary metabolites.</title>
        <authorList>
            <person name="Omura S."/>
            <person name="Ikeda H."/>
            <person name="Ishikawa J."/>
            <person name="Hanamoto A."/>
            <person name="Takahashi C."/>
            <person name="Shinose M."/>
            <person name="Takahashi Y."/>
            <person name="Horikawa H."/>
            <person name="Nakazawa H."/>
            <person name="Osonoe T."/>
            <person name="Kikuchi H."/>
            <person name="Shiba T."/>
            <person name="Sakaki Y."/>
            <person name="Hattori M."/>
        </authorList>
    </citation>
    <scope>NUCLEOTIDE SEQUENCE [LARGE SCALE GENOMIC DNA]</scope>
    <source>
        <strain>ATCC 31267 / DSM 46492 / JCM 5070 / NBRC 14893 / NCIMB 12804 / NRRL 8165 / MA-4680</strain>
    </source>
</reference>
<reference key="2">
    <citation type="journal article" date="2003" name="Nat. Biotechnol.">
        <title>Complete genome sequence and comparative analysis of the industrial microorganism Streptomyces avermitilis.</title>
        <authorList>
            <person name="Ikeda H."/>
            <person name="Ishikawa J."/>
            <person name="Hanamoto A."/>
            <person name="Shinose M."/>
            <person name="Kikuchi H."/>
            <person name="Shiba T."/>
            <person name="Sakaki Y."/>
            <person name="Hattori M."/>
            <person name="Omura S."/>
        </authorList>
    </citation>
    <scope>NUCLEOTIDE SEQUENCE [LARGE SCALE GENOMIC DNA]</scope>
    <source>
        <strain>ATCC 31267 / DSM 46492 / JCM 5070 / NBRC 14893 / NCIMB 12804 / NRRL 8165 / MA-4680</strain>
    </source>
</reference>
<organism>
    <name type="scientific">Streptomyces avermitilis (strain ATCC 31267 / DSM 46492 / JCM 5070 / NBRC 14893 / NCIMB 12804 / NRRL 8165 / MA-4680)</name>
    <dbReference type="NCBI Taxonomy" id="227882"/>
    <lineage>
        <taxon>Bacteria</taxon>
        <taxon>Bacillati</taxon>
        <taxon>Actinomycetota</taxon>
        <taxon>Actinomycetes</taxon>
        <taxon>Kitasatosporales</taxon>
        <taxon>Streptomycetaceae</taxon>
        <taxon>Streptomyces</taxon>
    </lineage>
</organism>
<gene>
    <name evidence="1" type="primary">serS2</name>
    <name type="ordered locus">SAV_2294</name>
</gene>
<name>SYS2_STRAW</name>